<organism>
    <name type="scientific">Pseudomonas aeruginosa (strain LESB58)</name>
    <dbReference type="NCBI Taxonomy" id="557722"/>
    <lineage>
        <taxon>Bacteria</taxon>
        <taxon>Pseudomonadati</taxon>
        <taxon>Pseudomonadota</taxon>
        <taxon>Gammaproteobacteria</taxon>
        <taxon>Pseudomonadales</taxon>
        <taxon>Pseudomonadaceae</taxon>
        <taxon>Pseudomonas</taxon>
    </lineage>
</organism>
<proteinExistence type="inferred from homology"/>
<sequence length="200" mass="21613">MQLNVSGAQAIEVSERTFGGEFNETLVHQAVVAYMAGGRQGSKAQKTRSEVSGGGKKPWRQKGTGRARAGTIRSPIWRGGGTTFAAKPRSHEQKLNKKMYRAALRSILAELVRLDRLVVVADFAVDAPKTKGLVAKLDTLGLKDVLIVTDGVDENLYLAARNLAHVDVRDVQGSDPVSLIAYDKVLVTVSAVKKFEELLG</sequence>
<dbReference type="EMBL" id="FM209186">
    <property type="protein sequence ID" value="CAW25393.1"/>
    <property type="molecule type" value="Genomic_DNA"/>
</dbReference>
<dbReference type="RefSeq" id="WP_012613539.1">
    <property type="nucleotide sequence ID" value="NC_011770.1"/>
</dbReference>
<dbReference type="SMR" id="B7V645"/>
<dbReference type="KEGG" id="pag:PLES_06661"/>
<dbReference type="HOGENOM" id="CLU_041575_5_2_6"/>
<dbReference type="GO" id="GO:1990904">
    <property type="term" value="C:ribonucleoprotein complex"/>
    <property type="evidence" value="ECO:0007669"/>
    <property type="project" value="UniProtKB-KW"/>
</dbReference>
<dbReference type="GO" id="GO:0005840">
    <property type="term" value="C:ribosome"/>
    <property type="evidence" value="ECO:0007669"/>
    <property type="project" value="UniProtKB-KW"/>
</dbReference>
<dbReference type="GO" id="GO:0019843">
    <property type="term" value="F:rRNA binding"/>
    <property type="evidence" value="ECO:0007669"/>
    <property type="project" value="UniProtKB-UniRule"/>
</dbReference>
<dbReference type="GO" id="GO:0003735">
    <property type="term" value="F:structural constituent of ribosome"/>
    <property type="evidence" value="ECO:0007669"/>
    <property type="project" value="InterPro"/>
</dbReference>
<dbReference type="GO" id="GO:0006412">
    <property type="term" value="P:translation"/>
    <property type="evidence" value="ECO:0007669"/>
    <property type="project" value="UniProtKB-UniRule"/>
</dbReference>
<dbReference type="FunFam" id="3.40.1370.10:FF:000001">
    <property type="entry name" value="50S ribosomal protein L4"/>
    <property type="match status" value="1"/>
</dbReference>
<dbReference type="Gene3D" id="3.40.1370.10">
    <property type="match status" value="1"/>
</dbReference>
<dbReference type="HAMAP" id="MF_01328_B">
    <property type="entry name" value="Ribosomal_uL4_B"/>
    <property type="match status" value="1"/>
</dbReference>
<dbReference type="InterPro" id="IPR002136">
    <property type="entry name" value="Ribosomal_uL4"/>
</dbReference>
<dbReference type="InterPro" id="IPR013005">
    <property type="entry name" value="Ribosomal_uL4-like"/>
</dbReference>
<dbReference type="InterPro" id="IPR023574">
    <property type="entry name" value="Ribosomal_uL4_dom_sf"/>
</dbReference>
<dbReference type="NCBIfam" id="TIGR03953">
    <property type="entry name" value="rplD_bact"/>
    <property type="match status" value="1"/>
</dbReference>
<dbReference type="PANTHER" id="PTHR10746">
    <property type="entry name" value="50S RIBOSOMAL PROTEIN L4"/>
    <property type="match status" value="1"/>
</dbReference>
<dbReference type="PANTHER" id="PTHR10746:SF6">
    <property type="entry name" value="LARGE RIBOSOMAL SUBUNIT PROTEIN UL4M"/>
    <property type="match status" value="1"/>
</dbReference>
<dbReference type="Pfam" id="PF00573">
    <property type="entry name" value="Ribosomal_L4"/>
    <property type="match status" value="1"/>
</dbReference>
<dbReference type="SUPFAM" id="SSF52166">
    <property type="entry name" value="Ribosomal protein L4"/>
    <property type="match status" value="1"/>
</dbReference>
<gene>
    <name evidence="1" type="primary">rplD</name>
    <name type="ordered locus">PLES_06661</name>
</gene>
<accession>B7V645</accession>
<protein>
    <recommendedName>
        <fullName evidence="1">Large ribosomal subunit protein uL4</fullName>
    </recommendedName>
    <alternativeName>
        <fullName evidence="3">50S ribosomal protein L4</fullName>
    </alternativeName>
</protein>
<name>RL4_PSEA8</name>
<reference key="1">
    <citation type="journal article" date="2009" name="Genome Res.">
        <title>Newly introduced genomic prophage islands are critical determinants of in vivo competitiveness in the Liverpool epidemic strain of Pseudomonas aeruginosa.</title>
        <authorList>
            <person name="Winstanley C."/>
            <person name="Langille M.G.I."/>
            <person name="Fothergill J.L."/>
            <person name="Kukavica-Ibrulj I."/>
            <person name="Paradis-Bleau C."/>
            <person name="Sanschagrin F."/>
            <person name="Thomson N.R."/>
            <person name="Winsor G.L."/>
            <person name="Quail M.A."/>
            <person name="Lennard N."/>
            <person name="Bignell A."/>
            <person name="Clarke L."/>
            <person name="Seeger K."/>
            <person name="Saunders D."/>
            <person name="Harris D."/>
            <person name="Parkhill J."/>
            <person name="Hancock R.E.W."/>
            <person name="Brinkman F.S.L."/>
            <person name="Levesque R.C."/>
        </authorList>
    </citation>
    <scope>NUCLEOTIDE SEQUENCE [LARGE SCALE GENOMIC DNA]</scope>
    <source>
        <strain>LESB58</strain>
    </source>
</reference>
<feature type="chain" id="PRO_1000142171" description="Large ribosomal subunit protein uL4">
    <location>
        <begin position="1"/>
        <end position="200"/>
    </location>
</feature>
<feature type="region of interest" description="Disordered" evidence="2">
    <location>
        <begin position="38"/>
        <end position="65"/>
    </location>
</feature>
<comment type="function">
    <text evidence="1">One of the primary rRNA binding proteins, this protein initially binds near the 5'-end of the 23S rRNA. It is important during the early stages of 50S assembly. It makes multiple contacts with different domains of the 23S rRNA in the assembled 50S subunit and ribosome.</text>
</comment>
<comment type="function">
    <text evidence="1">Forms part of the polypeptide exit tunnel.</text>
</comment>
<comment type="subunit">
    <text evidence="1">Part of the 50S ribosomal subunit.</text>
</comment>
<comment type="similarity">
    <text evidence="1">Belongs to the universal ribosomal protein uL4 family.</text>
</comment>
<keyword id="KW-0687">Ribonucleoprotein</keyword>
<keyword id="KW-0689">Ribosomal protein</keyword>
<keyword id="KW-0694">RNA-binding</keyword>
<keyword id="KW-0699">rRNA-binding</keyword>
<evidence type="ECO:0000255" key="1">
    <source>
        <dbReference type="HAMAP-Rule" id="MF_01328"/>
    </source>
</evidence>
<evidence type="ECO:0000256" key="2">
    <source>
        <dbReference type="SAM" id="MobiDB-lite"/>
    </source>
</evidence>
<evidence type="ECO:0000305" key="3"/>